<keyword id="KW-1015">Disulfide bond</keyword>
<keyword id="KW-0325">Glycoprotein</keyword>
<keyword id="KW-0378">Hydrolase</keyword>
<keyword id="KW-0472">Membrane</keyword>
<keyword id="KW-0645">Protease</keyword>
<keyword id="KW-1185">Reference proteome</keyword>
<keyword id="KW-0677">Repeat</keyword>
<keyword id="KW-0720">Serine protease</keyword>
<keyword id="KW-0735">Signal-anchor</keyword>
<keyword id="KW-0812">Transmembrane</keyword>
<keyword id="KW-1133">Transmembrane helix</keyword>
<keyword id="KW-0865">Zymogen</keyword>
<reference key="1">
    <citation type="journal article" date="1998" name="Am. J. Physiol.">
        <title>Structure of murine enterokinase (enteropeptidase) and expression in small intestine during development.</title>
        <authorList>
            <person name="Yuan X."/>
            <person name="Zheng X."/>
            <person name="Lu D."/>
            <person name="Rubin D.C."/>
            <person name="Pung C.Y.M."/>
            <person name="Sadler J.E."/>
        </authorList>
    </citation>
    <scope>NUCLEOTIDE SEQUENCE [MRNA]</scope>
    <source>
        <strain>C57BL/6J</strain>
        <tissue>Duodenum</tissue>
    </source>
</reference>
<reference key="2">
    <citation type="journal article" date="2004" name="Genome Res.">
        <title>The status, quality, and expansion of the NIH full-length cDNA project: the Mammalian Gene Collection (MGC).</title>
        <authorList>
            <consortium name="The MGC Project Team"/>
        </authorList>
    </citation>
    <scope>NUCLEOTIDE SEQUENCE [LARGE SCALE MRNA]</scope>
</reference>
<proteinExistence type="evidence at transcript level"/>
<evidence type="ECO:0000250" key="1"/>
<evidence type="ECO:0000255" key="2"/>
<evidence type="ECO:0000255" key="3">
    <source>
        <dbReference type="PROSITE-ProRule" id="PRU00059"/>
    </source>
</evidence>
<evidence type="ECO:0000255" key="4">
    <source>
        <dbReference type="PROSITE-ProRule" id="PRU00124"/>
    </source>
</evidence>
<evidence type="ECO:0000255" key="5">
    <source>
        <dbReference type="PROSITE-ProRule" id="PRU00128"/>
    </source>
</evidence>
<evidence type="ECO:0000255" key="6">
    <source>
        <dbReference type="PROSITE-ProRule" id="PRU00188"/>
    </source>
</evidence>
<evidence type="ECO:0000255" key="7">
    <source>
        <dbReference type="PROSITE-ProRule" id="PRU00196"/>
    </source>
</evidence>
<evidence type="ECO:0000255" key="8">
    <source>
        <dbReference type="PROSITE-ProRule" id="PRU00274"/>
    </source>
</evidence>
<evidence type="ECO:0000305" key="9"/>
<organism>
    <name type="scientific">Mus musculus</name>
    <name type="common">Mouse</name>
    <dbReference type="NCBI Taxonomy" id="10090"/>
    <lineage>
        <taxon>Eukaryota</taxon>
        <taxon>Metazoa</taxon>
        <taxon>Chordata</taxon>
        <taxon>Craniata</taxon>
        <taxon>Vertebrata</taxon>
        <taxon>Euteleostomi</taxon>
        <taxon>Mammalia</taxon>
        <taxon>Eutheria</taxon>
        <taxon>Euarchontoglires</taxon>
        <taxon>Glires</taxon>
        <taxon>Rodentia</taxon>
        <taxon>Myomorpha</taxon>
        <taxon>Muroidea</taxon>
        <taxon>Muridae</taxon>
        <taxon>Murinae</taxon>
        <taxon>Mus</taxon>
        <taxon>Mus</taxon>
    </lineage>
</organism>
<sequence>MKSSRDEAVGHHSISSFEVMLSALFIMLMVFSIGLIAVSWLAVKESEGDAALGKSHEVRGTFKITSGVTYNPNLQDKHSVDFKVLAFDLQQMIDEIFESSSLKNEYEKSKVFQFEKGSVIVLFDLFFAQWVSDKNVKEELIQGIEANISSQLVTLHIDLNSIDITASLSDFTTAVPVTTSDKLTTSSPMTTSASLGNLSTTVAATTSAPLCNLSTATFATTSGHVSIECQPGSRPCAHAWNCVATDLFCDGEVNCPDGSDEDTGLCATACDGRFLLTGDSGVFQADRYPRPDESGVVCRWIIRVNQGLSIRMNFGSFIPHYTDVLDIYEGIGPSKILRGSFWETDPGTIRIFSNLVTVTFLIKSDEYDYIGFNATYSTFNNSELNNYEKIDCTFDDGFCFWTQDLDDDNEWERIQVTTFPCYTGPRFDHTYGNGSGFYISTPTEQGWRSERVGLSSLSLDLTSEPVCLHFWYYMCCENVYNLNIHISSAETTDKIVFQRKGNYGRNWNYGQVTLNETGEFKVVFNAFRNRGCSTIALDDISLTNGICSQSPYPEPTLVPTPPPELPTDCGGPFELWEPNSTFSSPNFPDKYPNQASCIWNLNAQRGKNIQLHFQEFDLENINDVVEVRDGGEFDSLLLAVYTGPGPVKDLFSTTNRMTVIFTTNMETRRKGFKANFTSGYYLGIPEPCQDDEFQCKDGNCIPLGNLCDSYPHCRDGSDEASCVRFLNGTRSNNGLVQFNIHSIWHIACAENWTTQISNEVCHLLGLGSANSSMPISSTGGGPFVRVNQAPNGSLILTPSLQCSQDSLILLQCNHKSCGEKKVTQKVSPKIVGGSDAQAGAWPWVVALYHRDRSTDRLLCGASLVSSDWLVSAAHCVYRRNLDPTRWTAVLGLHMQSNLTSPQVVRRVVDQIVINPHYDRRRKVNDIAMMHLEFKVNYTDYIQPICLPEENQIFIPGRTCSIAGWGYDKINAGSTVDVLKEADVPLISNEKCQQQLPEYNITESMICAGYEEGGIDSCQGDSGGPLMCQENNRWFLVGVTSFGVQCALPNHPGVYVRVSQFIEWIHSFLH</sequence>
<protein>
    <recommendedName>
        <fullName>Enteropeptidase</fullName>
        <ecNumber>3.4.21.9</ecNumber>
    </recommendedName>
    <alternativeName>
        <fullName>Enterokinase</fullName>
    </alternativeName>
    <alternativeName>
        <fullName>Serine protease 7</fullName>
    </alternativeName>
    <alternativeName>
        <fullName>Transmembrane protease serine 15</fullName>
    </alternativeName>
    <component>
        <recommendedName>
            <fullName>Enteropeptidase non-catalytic heavy chain</fullName>
        </recommendedName>
    </component>
    <component>
        <recommendedName>
            <fullName>Enteropeptidase catalytic light chain</fullName>
        </recommendedName>
    </component>
</protein>
<name>ENTK_MOUSE</name>
<gene>
    <name type="primary">Tmprss15</name>
    <name type="synonym">Entk</name>
    <name type="synonym">Prss7</name>
</gene>
<comment type="function">
    <text evidence="1">Responsible for initiating activation of pancreatic proteolytic proenzymes (trypsin, chymotrypsin and carboxypeptidase A). It catalyzes the conversion of trypsinogen to trypsin which in turn activates other proenzymes including chymotrypsinogen, procarboxypeptidases, and proelastases (By similarity).</text>
</comment>
<comment type="catalytic activity">
    <reaction>
        <text>Activation of trypsinogen by selective cleavage of 6-Lys-|-Ile-7 bond.</text>
        <dbReference type="EC" id="3.4.21.9"/>
    </reaction>
</comment>
<comment type="subunit">
    <text evidence="1">Heterodimer of a catalytic (light) chain and a multidomain (heavy) chain linked by a disulfide bond.</text>
</comment>
<comment type="subcellular location">
    <subcellularLocation>
        <location evidence="9">Membrane</location>
        <topology evidence="9">Single-pass type II membrane protein</topology>
    </subcellularLocation>
</comment>
<comment type="PTM">
    <text evidence="1">The chains are derived from a single precursor that is cleaved by a trypsin-like protease.</text>
</comment>
<comment type="similarity">
    <text evidence="8">Belongs to the peptidase S1 family.</text>
</comment>
<accession>P97435</accession>
<accession>Q148Y3</accession>
<feature type="chain" id="PRO_0000027721" description="Enteropeptidase non-catalytic heavy chain">
    <location>
        <begin position="1"/>
        <end position="829"/>
    </location>
</feature>
<feature type="chain" id="PRO_0000027722" description="Enteropeptidase catalytic light chain">
    <location>
        <begin position="830"/>
        <end position="1069"/>
    </location>
</feature>
<feature type="topological domain" description="Cytoplasmic" evidence="2">
    <location>
        <begin position="1"/>
        <end position="18"/>
    </location>
</feature>
<feature type="transmembrane region" description="Helical; Signal-anchor for type II membrane protein" evidence="2">
    <location>
        <begin position="19"/>
        <end position="47"/>
    </location>
</feature>
<feature type="topological domain" description="Extracellular" evidence="2">
    <location>
        <begin position="48"/>
        <end position="1069"/>
    </location>
</feature>
<feature type="domain" description="SEA" evidence="6">
    <location>
        <begin position="54"/>
        <end position="169"/>
    </location>
</feature>
<feature type="domain" description="LDL-receptor class A 1" evidence="4">
    <location>
        <begin position="227"/>
        <end position="268"/>
    </location>
</feature>
<feature type="domain" description="CUB 1" evidence="3">
    <location>
        <begin position="270"/>
        <end position="379"/>
    </location>
</feature>
<feature type="domain" description="MAM" evidence="5">
    <location>
        <begin position="387"/>
        <end position="549"/>
    </location>
</feature>
<feature type="domain" description="CUB 2" evidence="3">
    <location>
        <begin position="569"/>
        <end position="679"/>
    </location>
</feature>
<feature type="domain" description="LDL-receptor class A 2" evidence="4">
    <location>
        <begin position="686"/>
        <end position="724"/>
    </location>
</feature>
<feature type="domain" description="SRCR" evidence="7">
    <location>
        <begin position="723"/>
        <end position="816"/>
    </location>
</feature>
<feature type="domain" description="Peptidase S1" evidence="8">
    <location>
        <begin position="830"/>
        <end position="1069"/>
    </location>
</feature>
<feature type="active site" description="Charge relay system" evidence="1">
    <location>
        <position position="874"/>
    </location>
</feature>
<feature type="active site" description="Charge relay system" evidence="1">
    <location>
        <position position="925"/>
    </location>
</feature>
<feature type="active site" description="Charge relay system" evidence="1">
    <location>
        <position position="1021"/>
    </location>
</feature>
<feature type="glycosylation site" description="N-linked (GlcNAc...) asparagine" evidence="2">
    <location>
        <position position="147"/>
    </location>
</feature>
<feature type="glycosylation site" description="N-linked (GlcNAc...) asparagine" evidence="2">
    <location>
        <position position="197"/>
    </location>
</feature>
<feature type="glycosylation site" description="N-linked (GlcNAc...) asparagine" evidence="2">
    <location>
        <position position="212"/>
    </location>
</feature>
<feature type="glycosylation site" description="N-linked (GlcNAc...) asparagine" evidence="2">
    <location>
        <position position="373"/>
    </location>
</feature>
<feature type="glycosylation site" description="N-linked (GlcNAc...) asparagine" evidence="2">
    <location>
        <position position="380"/>
    </location>
</feature>
<feature type="glycosylation site" description="N-linked (GlcNAc...) asparagine" evidence="2">
    <location>
        <position position="433"/>
    </location>
</feature>
<feature type="glycosylation site" description="N-linked (GlcNAc...) asparagine" evidence="2">
    <location>
        <position position="515"/>
    </location>
</feature>
<feature type="glycosylation site" description="N-linked (GlcNAc...) asparagine" evidence="2">
    <location>
        <position position="579"/>
    </location>
</feature>
<feature type="glycosylation site" description="N-linked (GlcNAc...) asparagine" evidence="2">
    <location>
        <position position="675"/>
    </location>
</feature>
<feature type="glycosylation site" description="N-linked (GlcNAc...) asparagine" evidence="2">
    <location>
        <position position="727"/>
    </location>
</feature>
<feature type="glycosylation site" description="N-linked (GlcNAc...) asparagine" evidence="2">
    <location>
        <position position="751"/>
    </location>
</feature>
<feature type="glycosylation site" description="N-linked (GlcNAc...) asparagine" evidence="2">
    <location>
        <position position="770"/>
    </location>
</feature>
<feature type="glycosylation site" description="N-linked (GlcNAc...) asparagine" evidence="2">
    <location>
        <position position="791"/>
    </location>
</feature>
<feature type="glycosylation site" description="N-linked (GlcNAc...) asparagine" evidence="2">
    <location>
        <position position="897"/>
    </location>
</feature>
<feature type="glycosylation site" description="N-linked (GlcNAc...) asparagine" evidence="2">
    <location>
        <position position="936"/>
    </location>
</feature>
<feature type="glycosylation site" description="N-linked (GlcNAc...) asparagine" evidence="2">
    <location>
        <position position="999"/>
    </location>
</feature>
<feature type="disulfide bond" evidence="1">
    <location>
        <begin position="229"/>
        <end position="242"/>
    </location>
</feature>
<feature type="disulfide bond" evidence="1">
    <location>
        <begin position="236"/>
        <end position="255"/>
    </location>
</feature>
<feature type="disulfide bond" evidence="1">
    <location>
        <begin position="249"/>
        <end position="266"/>
    </location>
</feature>
<feature type="disulfide bond" evidence="1">
    <location>
        <begin position="270"/>
        <end position="298"/>
    </location>
</feature>
<feature type="disulfide bond" evidence="1">
    <location>
        <begin position="569"/>
        <end position="597"/>
    </location>
</feature>
<feature type="disulfide bond" evidence="1">
    <location>
        <begin position="688"/>
        <end position="700"/>
    </location>
</feature>
<feature type="disulfide bond" evidence="1">
    <location>
        <begin position="695"/>
        <end position="713"/>
    </location>
</feature>
<feature type="disulfide bond" evidence="1">
    <location>
        <begin position="707"/>
        <end position="722"/>
    </location>
</feature>
<feature type="disulfide bond" evidence="1">
    <location>
        <begin position="802"/>
        <end position="812"/>
    </location>
</feature>
<feature type="disulfide bond" description="Interchain (between heavy and light chains)" evidence="3 4 7 8">
    <location>
        <begin position="817"/>
        <end position="945"/>
    </location>
</feature>
<feature type="disulfide bond" evidence="1">
    <location>
        <begin position="859"/>
        <end position="875"/>
    </location>
</feature>
<feature type="disulfide bond" evidence="1">
    <location>
        <begin position="959"/>
        <end position="1027"/>
    </location>
</feature>
<feature type="disulfide bond" evidence="1">
    <location>
        <begin position="991"/>
        <end position="1006"/>
    </location>
</feature>
<feature type="disulfide bond" evidence="1">
    <location>
        <begin position="1017"/>
        <end position="1045"/>
    </location>
</feature>
<dbReference type="EC" id="3.4.21.9"/>
<dbReference type="EMBL" id="U73378">
    <property type="protein sequence ID" value="AAB37317.1"/>
    <property type="molecule type" value="mRNA"/>
</dbReference>
<dbReference type="EMBL" id="BC117917">
    <property type="protein sequence ID" value="AAI17918.1"/>
    <property type="molecule type" value="mRNA"/>
</dbReference>
<dbReference type="EMBL" id="BC117918">
    <property type="protein sequence ID" value="AAI17919.1"/>
    <property type="molecule type" value="mRNA"/>
</dbReference>
<dbReference type="CCDS" id="CCDS28280.1"/>
<dbReference type="RefSeq" id="NP_032967.1">
    <property type="nucleotide sequence ID" value="NM_008941.4"/>
</dbReference>
<dbReference type="RefSeq" id="NP_849186.2">
    <property type="nucleotide sequence ID" value="NM_178855.4"/>
</dbReference>
<dbReference type="SMR" id="P97435"/>
<dbReference type="FunCoup" id="P97435">
    <property type="interactions" value="20"/>
</dbReference>
<dbReference type="STRING" id="10090.ENSMUSP00000023566"/>
<dbReference type="MEROPS" id="S01.156"/>
<dbReference type="GlyCosmos" id="P97435">
    <property type="glycosylation" value="16 sites, No reported glycans"/>
</dbReference>
<dbReference type="GlyGen" id="P97435">
    <property type="glycosylation" value="17 sites"/>
</dbReference>
<dbReference type="iPTMnet" id="P97435"/>
<dbReference type="PhosphoSitePlus" id="P97435"/>
<dbReference type="PaxDb" id="10090-ENSMUSP00000023566"/>
<dbReference type="ProteomicsDB" id="275916"/>
<dbReference type="Antibodypedia" id="2519">
    <property type="antibodies" value="235 antibodies from 29 providers"/>
</dbReference>
<dbReference type="DNASU" id="19146"/>
<dbReference type="Ensembl" id="ENSMUST00000023566.11">
    <property type="protein sequence ID" value="ENSMUSP00000023566.5"/>
    <property type="gene ID" value="ENSMUSG00000022857.14"/>
</dbReference>
<dbReference type="GeneID" id="19146"/>
<dbReference type="KEGG" id="mmu:19146"/>
<dbReference type="UCSC" id="uc007zsy.2">
    <property type="organism name" value="mouse"/>
</dbReference>
<dbReference type="AGR" id="MGI:1197523"/>
<dbReference type="CTD" id="5651"/>
<dbReference type="MGI" id="MGI:1197523">
    <property type="gene designation" value="Tmprss15"/>
</dbReference>
<dbReference type="VEuPathDB" id="HostDB:ENSMUSG00000022857"/>
<dbReference type="eggNOG" id="KOG3627">
    <property type="taxonomic scope" value="Eukaryota"/>
</dbReference>
<dbReference type="GeneTree" id="ENSGT00940000159353"/>
<dbReference type="InParanoid" id="P97435"/>
<dbReference type="OMA" id="THGICNG"/>
<dbReference type="OrthoDB" id="425190at2759"/>
<dbReference type="PhylomeDB" id="P97435"/>
<dbReference type="TreeFam" id="TF351678"/>
<dbReference type="BioGRID-ORCS" id="19146">
    <property type="hits" value="4 hits in 79 CRISPR screens"/>
</dbReference>
<dbReference type="ChiTaRS" id="Tmprss15">
    <property type="organism name" value="mouse"/>
</dbReference>
<dbReference type="PRO" id="PR:P97435"/>
<dbReference type="Proteomes" id="UP000000589">
    <property type="component" value="Chromosome 16"/>
</dbReference>
<dbReference type="RNAct" id="P97435">
    <property type="molecule type" value="protein"/>
</dbReference>
<dbReference type="Bgee" id="ENSMUSG00000022857">
    <property type="expression patterns" value="Expressed in duodenum and 20 other cell types or tissues"/>
</dbReference>
<dbReference type="ExpressionAtlas" id="P97435">
    <property type="expression patterns" value="baseline and differential"/>
</dbReference>
<dbReference type="GO" id="GO:0016020">
    <property type="term" value="C:membrane"/>
    <property type="evidence" value="ECO:0007669"/>
    <property type="project" value="UniProtKB-SubCell"/>
</dbReference>
<dbReference type="GO" id="GO:0004252">
    <property type="term" value="F:serine-type endopeptidase activity"/>
    <property type="evidence" value="ECO:0007669"/>
    <property type="project" value="UniProtKB-EC"/>
</dbReference>
<dbReference type="GO" id="GO:0006508">
    <property type="term" value="P:proteolysis"/>
    <property type="evidence" value="ECO:0007669"/>
    <property type="project" value="UniProtKB-KW"/>
</dbReference>
<dbReference type="CDD" id="cd00041">
    <property type="entry name" value="CUB"/>
    <property type="match status" value="2"/>
</dbReference>
<dbReference type="CDD" id="cd00112">
    <property type="entry name" value="LDLa"/>
    <property type="match status" value="2"/>
</dbReference>
<dbReference type="CDD" id="cd06263">
    <property type="entry name" value="MAM"/>
    <property type="match status" value="1"/>
</dbReference>
<dbReference type="CDD" id="cd00190">
    <property type="entry name" value="Tryp_SPc"/>
    <property type="match status" value="1"/>
</dbReference>
<dbReference type="FunFam" id="2.60.120.290:FF:000043">
    <property type="entry name" value="Enteropeptidase"/>
    <property type="match status" value="1"/>
</dbReference>
<dbReference type="FunFam" id="3.10.250.10:FF:000029">
    <property type="entry name" value="Enteropeptidase"/>
    <property type="match status" value="1"/>
</dbReference>
<dbReference type="FunFam" id="3.30.70.960:FF:000007">
    <property type="entry name" value="Enteropeptidase"/>
    <property type="match status" value="1"/>
</dbReference>
<dbReference type="FunFam" id="4.10.400.10:FF:000144">
    <property type="entry name" value="enteropeptidase"/>
    <property type="match status" value="1"/>
</dbReference>
<dbReference type="FunFam" id="2.60.120.200:FF:000128">
    <property type="entry name" value="enteropeptidase isoform X2"/>
    <property type="match status" value="1"/>
</dbReference>
<dbReference type="FunFam" id="2.60.120.290:FF:000038">
    <property type="entry name" value="enteropeptidase isoform X2"/>
    <property type="match status" value="1"/>
</dbReference>
<dbReference type="FunFam" id="4.10.400.10:FF:000149">
    <property type="entry name" value="enteropeptidase isoform X2"/>
    <property type="match status" value="1"/>
</dbReference>
<dbReference type="FunFam" id="2.40.10.10:FF:000003">
    <property type="entry name" value="Transmembrane serine protease 3"/>
    <property type="match status" value="1"/>
</dbReference>
<dbReference type="Gene3D" id="2.60.120.200">
    <property type="match status" value="1"/>
</dbReference>
<dbReference type="Gene3D" id="4.10.400.10">
    <property type="entry name" value="Low-density Lipoprotein Receptor"/>
    <property type="match status" value="2"/>
</dbReference>
<dbReference type="Gene3D" id="3.30.70.960">
    <property type="entry name" value="SEA domain"/>
    <property type="match status" value="1"/>
</dbReference>
<dbReference type="Gene3D" id="2.60.120.290">
    <property type="entry name" value="Spermadhesin, CUB domain"/>
    <property type="match status" value="2"/>
</dbReference>
<dbReference type="Gene3D" id="3.10.250.10">
    <property type="entry name" value="SRCR-like domain"/>
    <property type="match status" value="1"/>
</dbReference>
<dbReference type="Gene3D" id="2.40.10.10">
    <property type="entry name" value="Trypsin-like serine proteases"/>
    <property type="match status" value="2"/>
</dbReference>
<dbReference type="InterPro" id="IPR013320">
    <property type="entry name" value="ConA-like_dom_sf"/>
</dbReference>
<dbReference type="InterPro" id="IPR000859">
    <property type="entry name" value="CUB_dom"/>
</dbReference>
<dbReference type="InterPro" id="IPR036055">
    <property type="entry name" value="LDL_receptor-like_sf"/>
</dbReference>
<dbReference type="InterPro" id="IPR023415">
    <property type="entry name" value="LDLR_class-A_CS"/>
</dbReference>
<dbReference type="InterPro" id="IPR002172">
    <property type="entry name" value="LDrepeatLR_classA_rpt"/>
</dbReference>
<dbReference type="InterPro" id="IPR000998">
    <property type="entry name" value="MAM_dom"/>
</dbReference>
<dbReference type="InterPro" id="IPR011163">
    <property type="entry name" value="Pept_S1A_enterop"/>
</dbReference>
<dbReference type="InterPro" id="IPR009003">
    <property type="entry name" value="Peptidase_S1_PA"/>
</dbReference>
<dbReference type="InterPro" id="IPR043504">
    <property type="entry name" value="Peptidase_S1_PA_chymotrypsin"/>
</dbReference>
<dbReference type="InterPro" id="IPR001314">
    <property type="entry name" value="Peptidase_S1A"/>
</dbReference>
<dbReference type="InterPro" id="IPR000082">
    <property type="entry name" value="SEA_dom"/>
</dbReference>
<dbReference type="InterPro" id="IPR036364">
    <property type="entry name" value="SEA_dom_sf"/>
</dbReference>
<dbReference type="InterPro" id="IPR035914">
    <property type="entry name" value="Sperma_CUB_dom_sf"/>
</dbReference>
<dbReference type="InterPro" id="IPR001190">
    <property type="entry name" value="SRCR"/>
</dbReference>
<dbReference type="InterPro" id="IPR036772">
    <property type="entry name" value="SRCR-like_dom_sf"/>
</dbReference>
<dbReference type="InterPro" id="IPR001254">
    <property type="entry name" value="Trypsin_dom"/>
</dbReference>
<dbReference type="InterPro" id="IPR018114">
    <property type="entry name" value="TRYPSIN_HIS"/>
</dbReference>
<dbReference type="InterPro" id="IPR033116">
    <property type="entry name" value="TRYPSIN_SER"/>
</dbReference>
<dbReference type="PANTHER" id="PTHR24252">
    <property type="entry name" value="ACROSIN-RELATED"/>
    <property type="match status" value="1"/>
</dbReference>
<dbReference type="PANTHER" id="PTHR24252:SF16">
    <property type="entry name" value="TRANSMEMBRANE SERINE PROTEASE 15"/>
    <property type="match status" value="1"/>
</dbReference>
<dbReference type="Pfam" id="PF00431">
    <property type="entry name" value="CUB"/>
    <property type="match status" value="2"/>
</dbReference>
<dbReference type="Pfam" id="PF00057">
    <property type="entry name" value="Ldl_recept_a"/>
    <property type="match status" value="1"/>
</dbReference>
<dbReference type="Pfam" id="PF00629">
    <property type="entry name" value="MAM"/>
    <property type="match status" value="1"/>
</dbReference>
<dbReference type="Pfam" id="PF01390">
    <property type="entry name" value="SEA"/>
    <property type="match status" value="1"/>
</dbReference>
<dbReference type="Pfam" id="PF00530">
    <property type="entry name" value="SRCR"/>
    <property type="match status" value="1"/>
</dbReference>
<dbReference type="Pfam" id="PF00089">
    <property type="entry name" value="Trypsin"/>
    <property type="match status" value="1"/>
</dbReference>
<dbReference type="PIRSF" id="PIRSF001138">
    <property type="entry name" value="Enteropeptidase"/>
    <property type="match status" value="1"/>
</dbReference>
<dbReference type="PRINTS" id="PR00722">
    <property type="entry name" value="CHYMOTRYPSIN"/>
</dbReference>
<dbReference type="SMART" id="SM00042">
    <property type="entry name" value="CUB"/>
    <property type="match status" value="2"/>
</dbReference>
<dbReference type="SMART" id="SM00192">
    <property type="entry name" value="LDLa"/>
    <property type="match status" value="2"/>
</dbReference>
<dbReference type="SMART" id="SM00137">
    <property type="entry name" value="MAM"/>
    <property type="match status" value="1"/>
</dbReference>
<dbReference type="SMART" id="SM00200">
    <property type="entry name" value="SEA"/>
    <property type="match status" value="1"/>
</dbReference>
<dbReference type="SMART" id="SM00202">
    <property type="entry name" value="SR"/>
    <property type="match status" value="1"/>
</dbReference>
<dbReference type="SMART" id="SM00020">
    <property type="entry name" value="Tryp_SPc"/>
    <property type="match status" value="1"/>
</dbReference>
<dbReference type="SUPFAM" id="SSF49899">
    <property type="entry name" value="Concanavalin A-like lectins/glucanases"/>
    <property type="match status" value="1"/>
</dbReference>
<dbReference type="SUPFAM" id="SSF57424">
    <property type="entry name" value="LDL receptor-like module"/>
    <property type="match status" value="2"/>
</dbReference>
<dbReference type="SUPFAM" id="SSF82671">
    <property type="entry name" value="SEA domain"/>
    <property type="match status" value="1"/>
</dbReference>
<dbReference type="SUPFAM" id="SSF49854">
    <property type="entry name" value="Spermadhesin, CUB domain"/>
    <property type="match status" value="2"/>
</dbReference>
<dbReference type="SUPFAM" id="SSF56487">
    <property type="entry name" value="SRCR-like"/>
    <property type="match status" value="1"/>
</dbReference>
<dbReference type="SUPFAM" id="SSF50494">
    <property type="entry name" value="Trypsin-like serine proteases"/>
    <property type="match status" value="1"/>
</dbReference>
<dbReference type="PROSITE" id="PS01180">
    <property type="entry name" value="CUB"/>
    <property type="match status" value="2"/>
</dbReference>
<dbReference type="PROSITE" id="PS01209">
    <property type="entry name" value="LDLRA_1"/>
    <property type="match status" value="2"/>
</dbReference>
<dbReference type="PROSITE" id="PS50068">
    <property type="entry name" value="LDLRA_2"/>
    <property type="match status" value="2"/>
</dbReference>
<dbReference type="PROSITE" id="PS00740">
    <property type="entry name" value="MAM_1"/>
    <property type="match status" value="1"/>
</dbReference>
<dbReference type="PROSITE" id="PS50060">
    <property type="entry name" value="MAM_2"/>
    <property type="match status" value="1"/>
</dbReference>
<dbReference type="PROSITE" id="PS50024">
    <property type="entry name" value="SEA"/>
    <property type="match status" value="1"/>
</dbReference>
<dbReference type="PROSITE" id="PS00420">
    <property type="entry name" value="SRCR_1"/>
    <property type="match status" value="1"/>
</dbReference>
<dbReference type="PROSITE" id="PS50287">
    <property type="entry name" value="SRCR_2"/>
    <property type="match status" value="1"/>
</dbReference>
<dbReference type="PROSITE" id="PS50240">
    <property type="entry name" value="TRYPSIN_DOM"/>
    <property type="match status" value="1"/>
</dbReference>
<dbReference type="PROSITE" id="PS00134">
    <property type="entry name" value="TRYPSIN_HIS"/>
    <property type="match status" value="1"/>
</dbReference>
<dbReference type="PROSITE" id="PS00135">
    <property type="entry name" value="TRYPSIN_SER"/>
    <property type="match status" value="1"/>
</dbReference>